<gene>
    <name evidence="3" type="primary">PATJ</name>
    <name evidence="2" type="synonym">CIPP</name>
    <name evidence="3" type="synonym">INADL</name>
</gene>
<organism evidence="13">
    <name type="scientific">Canis lupus familiaris</name>
    <name type="common">Dog</name>
    <name type="synonym">Canis familiaris</name>
    <dbReference type="NCBI Taxonomy" id="9615"/>
    <lineage>
        <taxon>Eukaryota</taxon>
        <taxon>Metazoa</taxon>
        <taxon>Chordata</taxon>
        <taxon>Craniata</taxon>
        <taxon>Vertebrata</taxon>
        <taxon>Euteleostomi</taxon>
        <taxon>Mammalia</taxon>
        <taxon>Eutheria</taxon>
        <taxon>Laurasiatheria</taxon>
        <taxon>Carnivora</taxon>
        <taxon>Caniformia</taxon>
        <taxon>Canidae</taxon>
        <taxon>Canis</taxon>
    </lineage>
</organism>
<sequence>MPENPAPDKLQVLQVLDRLKMKLQEKGDTSQNEKLSLFYETLQSPLFNQILTLQQSIKQLKGQLSHIPSDCSTNFDFSRKGLLVFTDSAITNGNAQRPSNNLTVSGLFPWTPKSGNEDFNSVIQQMAQGRQIEYIDIERPSTGGLGFSVVALRSQNLGEVDIFVKEVQPGSIADRDQRLRENDQILAINHTPLDQNISHQQAIALLQQTTGSLHLVVAREPVHTKSRTSINLTDTTMPETVHWGHIEDVELINDGSGLGFGIVGGKSSGVVVRTIVPGGLADRDGRLQTGDHILKIGDTDVQGMTSEQVAQVLRNCGNSVRMLVARDPVGETSVTPPTPAALPVALPAVANRSPSTDSSLYETYGVELIKKDGQSLGIRIVGYIGTAHTGEASGIYVKSIIPGSAAYHNGQIQVNDKIVAVDGVNIQGFTNQDVVEVLRNAGQVVHLTLVRRKMCSSTSPLERSSDRGTVVEPSGTPARYVTGAVETETNLDGGDEETEERMDNLKNDNIQALEKLERVPDSPENELKSRWENLLGPDYEVMVATLDTQIADDAELQKYSKLLPIHTLRLGMEVDSFDGHHYISSIAPGGPVDALNLLQPEDELLEVNGVQLYGKSRREAVSFLKEVPPPFTLVCCRRLFDDEASVDEPRTTETLLPEMEADHNVDINTEEEEEEELALWSPEVKIVELVKDHKGLGFSILDYQDPLDPTRSVIVIRSLVANGVAEKGGELLPGDRLVSVNEYCLENTTLAEAVEVLKAVPPGIVHLGVCKPLVDNDKEEESHYILHSNNNEDETELSETIHDINSSLILEAPKGFRDEPYYKEELVDEPFLDLGKAFQSQQKEIDNSKEAWEMQEFLPPRLQEMGEEREMLVDEECDLYQDHFQSMDLYPSSHLQEAAPVSSVKELHFGTQWLHDSEPPELQEARSMMNMYSQETQQYGYSTENMIKENFGIDSLPSISSSEGNSQQGRFDDLENLNSLTKSSLDLGMMIPNDVQGPGMLVELPAVAQRREQEDLPLYQLPRTRVVSKASAYTGASSSRYTAGACELPEREEGEGEETPNFSHWGPPRIVEIFREPNVSLGISIVGGQTVIKRLKNGEELKGIFIKQVLEDSPAGKTNALKTGDKILEVSGVDLQNASHREAVEAIKNAGNPVVFVVQSLSSTPRVIPSVHNKANKIANNQDQNTEEKKEKRQGTPPPPMKLPPPYKAPSDDSDENEEEYAFTNKKIRQRYADLPGELHIIELEKDKNGLGLSLAGNKDRSRMSIFVVGINPEGPAATDGRMRIGDELLEINNQILYGRSHQNASAVIKTAPSKVKLVFIRNEDAVNQMAVAPFPVPSSSPSSLEDQSGTEPVSSEEDGSLEVGIKQLPENESSKLEDISQVAGQGMVAGQQKALDCPTDNAVSQMKPQKYSTKVSFSSQEIPLAPAPSYHSTDVDFTSYGGFQAPLSVDPATCPIVPGQEMIIEISKGRSGLGLSIVGGRDTPLDAIVIHEVYEEGAAARDGRLWAGDQILEVNGIDLRSASHEEAITALRQTPQKVRLVVYRDEAHYRDEENLEIFPVDLQKKAGRGLGLSIVGKRNGSGVFISDIVKGGAADLDRRLIQGDQILSVNGEDMRNASQETVATVLKCAQGLVQLEIGRLRAGSWTSSRKTSQNSQGSQHSTHSSFHPSLAPVITSLQNLVGTKRATDPSLKSSGMDMGPRTVEIIRELSDALGISIAGGKGSPLGDIPIFIAMIQASGVAARTQKLKVGDRIVSINGQPLDGLSHADVVNLLKNAYGRIILQVVADTNISAIATQLENMSTGYHLGSPTAEHHPEDTEEPLQMTAG</sequence>
<dbReference type="EMBL" id="AAEX03003771">
    <property type="status" value="NOT_ANNOTATED_CDS"/>
    <property type="molecule type" value="Genomic_DNA"/>
</dbReference>
<dbReference type="EMBL" id="AAEX03003772">
    <property type="status" value="NOT_ANNOTATED_CDS"/>
    <property type="molecule type" value="Genomic_DNA"/>
</dbReference>
<dbReference type="EMBL" id="AAEX03003773">
    <property type="status" value="NOT_ANNOTATED_CDS"/>
    <property type="molecule type" value="Genomic_DNA"/>
</dbReference>
<dbReference type="EMBL" id="AAEX03003774">
    <property type="status" value="NOT_ANNOTATED_CDS"/>
    <property type="molecule type" value="Genomic_DNA"/>
</dbReference>
<dbReference type="SMR" id="E2QYC9"/>
<dbReference type="CORUM" id="E2QYC9"/>
<dbReference type="FunCoup" id="E2QYC9">
    <property type="interactions" value="19"/>
</dbReference>
<dbReference type="Ensembl" id="ENSCAFT00000029899.5">
    <property type="protein sequence ID" value="ENSCAFP00000027787.4"/>
    <property type="gene ID" value="ENSCAFG00000018822.6"/>
</dbReference>
<dbReference type="VGNC" id="VGNC:44271">
    <property type="gene designation" value="PATJ"/>
</dbReference>
<dbReference type="eggNOG" id="KOG0708">
    <property type="taxonomic scope" value="Eukaryota"/>
</dbReference>
<dbReference type="eggNOG" id="KOG3528">
    <property type="taxonomic scope" value="Eukaryota"/>
</dbReference>
<dbReference type="HOGENOM" id="CLU_002378_1_0_1"/>
<dbReference type="InParanoid" id="E2QYC9"/>
<dbReference type="OMA" id="RQIEYIN"/>
<dbReference type="OrthoDB" id="6022711at2759"/>
<dbReference type="TreeFam" id="TF330709"/>
<dbReference type="Proteomes" id="UP000002254">
    <property type="component" value="Chromosome 5"/>
</dbReference>
<dbReference type="Proteomes" id="UP000694429">
    <property type="component" value="Unplaced"/>
</dbReference>
<dbReference type="Proteomes" id="UP000694542">
    <property type="component" value="Unplaced"/>
</dbReference>
<dbReference type="Proteomes" id="UP000805418">
    <property type="component" value="Unplaced"/>
</dbReference>
<dbReference type="Bgee" id="ENSCAFG00000018822">
    <property type="expression patterns" value="Expressed in cerebellum and 46 other cell types or tissues"/>
</dbReference>
<dbReference type="GO" id="GO:0045177">
    <property type="term" value="C:apical part of cell"/>
    <property type="evidence" value="ECO:0000318"/>
    <property type="project" value="GO_Central"/>
</dbReference>
<dbReference type="GO" id="GO:0016324">
    <property type="term" value="C:apical plasma membrane"/>
    <property type="evidence" value="ECO:0000314"/>
    <property type="project" value="UniProtKB"/>
</dbReference>
<dbReference type="GO" id="GO:0005923">
    <property type="term" value="C:bicellular tight junction"/>
    <property type="evidence" value="ECO:0000318"/>
    <property type="project" value="GO_Central"/>
</dbReference>
<dbReference type="GO" id="GO:0031252">
    <property type="term" value="C:cell leading edge"/>
    <property type="evidence" value="ECO:0000314"/>
    <property type="project" value="ARUK-UCL"/>
</dbReference>
<dbReference type="GO" id="GO:0005737">
    <property type="term" value="C:cytoplasm"/>
    <property type="evidence" value="ECO:0000318"/>
    <property type="project" value="GO_Central"/>
</dbReference>
<dbReference type="GO" id="GO:0048471">
    <property type="term" value="C:perinuclear region of cytoplasm"/>
    <property type="evidence" value="ECO:0007669"/>
    <property type="project" value="UniProtKB-SubCell"/>
</dbReference>
<dbReference type="GO" id="GO:0005886">
    <property type="term" value="C:plasma membrane"/>
    <property type="evidence" value="ECO:0000318"/>
    <property type="project" value="GO_Central"/>
</dbReference>
<dbReference type="GO" id="GO:0070160">
    <property type="term" value="C:tight junction"/>
    <property type="evidence" value="ECO:0000314"/>
    <property type="project" value="UniProtKB"/>
</dbReference>
<dbReference type="GO" id="GO:0035089">
    <property type="term" value="P:establishment of apical/basal cell polarity"/>
    <property type="evidence" value="ECO:0000315"/>
    <property type="project" value="UniProtKB"/>
</dbReference>
<dbReference type="GO" id="GO:0031023">
    <property type="term" value="P:microtubule organizing center organization"/>
    <property type="evidence" value="ECO:0000315"/>
    <property type="project" value="UniProtKB"/>
</dbReference>
<dbReference type="GO" id="GO:0010634">
    <property type="term" value="P:positive regulation of epithelial cell migration"/>
    <property type="evidence" value="ECO:0000315"/>
    <property type="project" value="UniProtKB"/>
</dbReference>
<dbReference type="GO" id="GO:0070507">
    <property type="term" value="P:regulation of microtubule cytoskeleton organization"/>
    <property type="evidence" value="ECO:0000315"/>
    <property type="project" value="UniProtKB"/>
</dbReference>
<dbReference type="GO" id="GO:0032880">
    <property type="term" value="P:regulation of protein localization"/>
    <property type="evidence" value="ECO:0000315"/>
    <property type="project" value="UniProtKB"/>
</dbReference>
<dbReference type="GO" id="GO:0120192">
    <property type="term" value="P:tight junction assembly"/>
    <property type="evidence" value="ECO:0000315"/>
    <property type="project" value="UniProtKB"/>
</dbReference>
<dbReference type="CDD" id="cd06673">
    <property type="entry name" value="PDZ10_MUPP1-PDZ8_PATJ-like"/>
    <property type="match status" value="1"/>
</dbReference>
<dbReference type="CDD" id="cd06674">
    <property type="entry name" value="PDZ11_MUPP1-PDZ9_PATJ-like"/>
    <property type="match status" value="1"/>
</dbReference>
<dbReference type="CDD" id="cd06675">
    <property type="entry name" value="PDZ12_MUPP1-like"/>
    <property type="match status" value="1"/>
</dbReference>
<dbReference type="CDD" id="cd06689">
    <property type="entry name" value="PDZ1_MUPP1-like"/>
    <property type="match status" value="1"/>
</dbReference>
<dbReference type="CDD" id="cd06667">
    <property type="entry name" value="PDZ2_MUPP1-like"/>
    <property type="match status" value="1"/>
</dbReference>
<dbReference type="CDD" id="cd06791">
    <property type="entry name" value="PDZ3_MUPP1-like"/>
    <property type="match status" value="1"/>
</dbReference>
<dbReference type="CDD" id="cd06668">
    <property type="entry name" value="PDZ4_MUPP1-like"/>
    <property type="match status" value="1"/>
</dbReference>
<dbReference type="CDD" id="cd06669">
    <property type="entry name" value="PDZ5_MUPP1-like"/>
    <property type="match status" value="1"/>
</dbReference>
<dbReference type="CDD" id="cd06671">
    <property type="entry name" value="PDZ7_MUPP1-PD6_PATJ-like"/>
    <property type="match status" value="1"/>
</dbReference>
<dbReference type="CDD" id="cd06672">
    <property type="entry name" value="PDZ8_MUPP1-PDZ7_PATJ-PDZ2_INAD-like"/>
    <property type="match status" value="1"/>
</dbReference>
<dbReference type="FunFam" id="2.30.42.10:FF:000112">
    <property type="entry name" value="inaD-like protein isoform X3"/>
    <property type="match status" value="1"/>
</dbReference>
<dbReference type="FunFam" id="2.30.42.10:FF:000070">
    <property type="entry name" value="Multiple PDZ domain protein"/>
    <property type="match status" value="1"/>
</dbReference>
<dbReference type="FunFam" id="2.30.42.10:FF:000038">
    <property type="entry name" value="Multiple PDZ domain protein isoform X1"/>
    <property type="match status" value="1"/>
</dbReference>
<dbReference type="FunFam" id="2.30.42.10:FF:000044">
    <property type="entry name" value="Multiple PDZ domain protein isoform X1"/>
    <property type="match status" value="1"/>
</dbReference>
<dbReference type="FunFam" id="2.30.42.10:FF:000051">
    <property type="entry name" value="Multiple PDZ domain protein isoform X1"/>
    <property type="match status" value="1"/>
</dbReference>
<dbReference type="FunFam" id="2.30.42.10:FF:000054">
    <property type="entry name" value="multiple PDZ domain protein isoform X1"/>
    <property type="match status" value="1"/>
</dbReference>
<dbReference type="FunFam" id="2.30.42.10:FF:000058">
    <property type="entry name" value="multiple PDZ domain protein isoform X1"/>
    <property type="match status" value="1"/>
</dbReference>
<dbReference type="FunFam" id="2.30.42.10:FF:000125">
    <property type="entry name" value="PATJ, crumbs cell polarity complex component"/>
    <property type="match status" value="1"/>
</dbReference>
<dbReference type="Gene3D" id="1.20.1440.360">
    <property type="match status" value="1"/>
</dbReference>
<dbReference type="Gene3D" id="2.30.42.10">
    <property type="match status" value="10"/>
</dbReference>
<dbReference type="InterPro" id="IPR015132">
    <property type="entry name" value="L27_2"/>
</dbReference>
<dbReference type="InterPro" id="IPR004172">
    <property type="entry name" value="L27_dom"/>
</dbReference>
<dbReference type="InterPro" id="IPR036892">
    <property type="entry name" value="L27_dom_sf"/>
</dbReference>
<dbReference type="InterPro" id="IPR001478">
    <property type="entry name" value="PDZ"/>
</dbReference>
<dbReference type="InterPro" id="IPR051342">
    <property type="entry name" value="PDZ_scaffold"/>
</dbReference>
<dbReference type="InterPro" id="IPR036034">
    <property type="entry name" value="PDZ_sf"/>
</dbReference>
<dbReference type="PANTHER" id="PTHR19964:SF11">
    <property type="entry name" value="INAD-LIKE PROTEIN"/>
    <property type="match status" value="1"/>
</dbReference>
<dbReference type="PANTHER" id="PTHR19964">
    <property type="entry name" value="MULTIPLE PDZ DOMAIN PROTEIN"/>
    <property type="match status" value="1"/>
</dbReference>
<dbReference type="Pfam" id="PF09045">
    <property type="entry name" value="L27_2"/>
    <property type="match status" value="1"/>
</dbReference>
<dbReference type="Pfam" id="PF00595">
    <property type="entry name" value="PDZ"/>
    <property type="match status" value="10"/>
</dbReference>
<dbReference type="SMART" id="SM00569">
    <property type="entry name" value="L27"/>
    <property type="match status" value="1"/>
</dbReference>
<dbReference type="SMART" id="SM00228">
    <property type="entry name" value="PDZ"/>
    <property type="match status" value="10"/>
</dbReference>
<dbReference type="SUPFAM" id="SSF101288">
    <property type="entry name" value="L27 domain"/>
    <property type="match status" value="1"/>
</dbReference>
<dbReference type="SUPFAM" id="SSF50156">
    <property type="entry name" value="PDZ domain-like"/>
    <property type="match status" value="10"/>
</dbReference>
<dbReference type="PROSITE" id="PS51022">
    <property type="entry name" value="L27"/>
    <property type="match status" value="1"/>
</dbReference>
<dbReference type="PROSITE" id="PS50106">
    <property type="entry name" value="PDZ"/>
    <property type="match status" value="10"/>
</dbReference>
<comment type="function">
    <text evidence="2 3 9 10 11">Scaffolding protein that facilitates the localization of proteins to the cell membrane (PubMed:17235357). Required for the correct formation of tight junctions and epithelial apico-basal polarity (PubMed:15738264). Acts (via its L27 domain) as an apical connector and elongation factor for multistranded TJP1/ZO1 condensates that form a tight junction belt, thereby required for the formation of the tight junction-mediated cell barrier (PubMed:39112699). Positively regulates epithelial cell microtubule elongation and cell migration, possibly via facilitating localization of PRKCI/aPKC and PAR3D/PAR3 at the leading edge of migrating cells (PubMed:17235357). Plays a role in the correct reorientation of the microtubule-organizing center during epithelial migration (PubMed:17235357). May regulate the surface expression and/or function of ASIC3 in sensory neurons (By similarity). May recruit ARHGEF18 to apical cell-cell boundaries (By similarity).</text>
</comment>
<comment type="subunit">
    <text evidence="1 2 3 7 9 10 11">Forms a ternary complex with PALS1 and CRB1 (By similarity). Component of a complex whose core is composed of ARHGAP17, AMOT, PALS1, INADL/PATJ and PARD3/PAR3 (By similarity). Forms a heterotrimeric complex composed of MMP5, LIN7B and PATJ; the N-terminal L27 domain of PALS1 interacts with the L27 domain of PATJ and the C-terminal L27 domain of PALS1 interacts with the L27 domain of LIN7B (By similarity). Component of a complex composed of CRB3, PALS1 and PATJ (PubMed:12527193, PubMed:15738264). As part of the Crumbs complex; interacts with WWP1, the interaction is enhanced by AMOTL2 and facilitates WWP1 localization to the plasma membrane (By similarity). The Crumbs complex promotes monoubiquitination of AMOTL2 by WWP1, which activates the Hippo signaling pathway (By similarity). Interacts (via N-terminus) with PALS1/PALS (via PDZ domain) (PubMed:15738264). Interacts with TJP3/ZO-3 and CLDN1/claudin-1 (By similarity). Interacts with ASIC3, KCNJ10, KCNJ15, GRIN2A, GRIN2B, GRIN2C, GRIN2D, NLGN2, and HTR2A (By similarity). Interacts with MPP7 (By similarity). Directly interacts with HTR4 (By similarity). Interacts (via PDZ domain 8) with WWC1 (via the ADDV motif) (By similarity). Interacts with SLC6A4 (By similarity). Interacts (via C-terminus) with ARHGEF18 (By similarity). Interacts with NPHP1 (By similarity). Interacts with PARD3/PAR3 (PubMed:17235357). Interacts (via PDZ1-6 domains) with TJP1/ZO1; the interaction is required for attachment and extension of TJP1/ZO1 condensates along the apical cell interface (PubMed:39112699).</text>
</comment>
<comment type="subcellular location">
    <subcellularLocation>
        <location evidence="7 8 9 11">Cell junction</location>
        <location evidence="7 8 9 11">Tight junction</location>
    </subcellularLocation>
    <subcellularLocation>
        <location evidence="9">Apical cell membrane</location>
        <topology evidence="3">Peripheral membrane protein</topology>
    </subcellularLocation>
    <subcellularLocation>
        <location evidence="2">Cytoplasm</location>
        <location evidence="2">Perinuclear region</location>
    </subcellularLocation>
    <text evidence="2 9 10 11">Localizes to the apical region at the start of epithelial cell polarization then locates to tight junctions as polarization is completed (PubMed:15738264). Localizes to the most apical strand of TJP1/ZO1 condensates during junctional condensation elongation (PubMed:39112699). Localized in the paranodal region of myelinating Schwann cells (By similarity). Localized to the leading edge of the actin cortex of migrating epithelia cells (PubMed:17235357).</text>
</comment>
<comment type="domain">
    <text evidence="3">The L27 domain (also called Maguk recruitment domain) is required for interaction with PALS1 and CRB3, and PALS1 localization to tight junctions.</text>
</comment>
<comment type="domain">
    <text evidence="3">The PDZ domain 6 mediates interaction with the C-terminus of TJP3 and is crucial for localization to the tight junctions (By similarity). The PDZ domain 8 interacts with CLDN1 but is not required for proper localization (By similarity).</text>
</comment>
<proteinExistence type="evidence at protein level"/>
<reference evidence="13" key="1">
    <citation type="journal article" date="2005" name="Nature">
        <title>Genome sequence, comparative analysis and haplotype structure of the domestic dog.</title>
        <authorList>
            <person name="Lindblad-Toh K."/>
            <person name="Wade C.M."/>
            <person name="Mikkelsen T.S."/>
            <person name="Karlsson E.K."/>
            <person name="Jaffe D.B."/>
            <person name="Kamal M."/>
            <person name="Clamp M."/>
            <person name="Chang J.L."/>
            <person name="Kulbokas E.J. III"/>
            <person name="Zody M.C."/>
            <person name="Mauceli E."/>
            <person name="Xie X."/>
            <person name="Breen M."/>
            <person name="Wayne R.K."/>
            <person name="Ostrander E.A."/>
            <person name="Ponting C.P."/>
            <person name="Galibert F."/>
            <person name="Smith D.R."/>
            <person name="deJong P.J."/>
            <person name="Kirkness E.F."/>
            <person name="Alvarez P."/>
            <person name="Biagi T."/>
            <person name="Brockman W."/>
            <person name="Butler J."/>
            <person name="Chin C.-W."/>
            <person name="Cook A."/>
            <person name="Cuff J."/>
            <person name="Daly M.J."/>
            <person name="DeCaprio D."/>
            <person name="Gnerre S."/>
            <person name="Grabherr M."/>
            <person name="Kellis M."/>
            <person name="Kleber M."/>
            <person name="Bardeleben C."/>
            <person name="Goodstadt L."/>
            <person name="Heger A."/>
            <person name="Hitte C."/>
            <person name="Kim L."/>
            <person name="Koepfli K.-P."/>
            <person name="Parker H.G."/>
            <person name="Pollinger J.P."/>
            <person name="Searle S.M.J."/>
            <person name="Sutter N.B."/>
            <person name="Thomas R."/>
            <person name="Webber C."/>
            <person name="Baldwin J."/>
            <person name="Abebe A."/>
            <person name="Abouelleil A."/>
            <person name="Aftuck L."/>
            <person name="Ait-Zahra M."/>
            <person name="Aldredge T."/>
            <person name="Allen N."/>
            <person name="An P."/>
            <person name="Anderson S."/>
            <person name="Antoine C."/>
            <person name="Arachchi H."/>
            <person name="Aslam A."/>
            <person name="Ayotte L."/>
            <person name="Bachantsang P."/>
            <person name="Barry A."/>
            <person name="Bayul T."/>
            <person name="Benamara M."/>
            <person name="Berlin A."/>
            <person name="Bessette D."/>
            <person name="Blitshteyn B."/>
            <person name="Bloom T."/>
            <person name="Blye J."/>
            <person name="Boguslavskiy L."/>
            <person name="Bonnet C."/>
            <person name="Boukhgalter B."/>
            <person name="Brown A."/>
            <person name="Cahill P."/>
            <person name="Calixte N."/>
            <person name="Camarata J."/>
            <person name="Cheshatsang Y."/>
            <person name="Chu J."/>
            <person name="Citroen M."/>
            <person name="Collymore A."/>
            <person name="Cooke P."/>
            <person name="Dawoe T."/>
            <person name="Daza R."/>
            <person name="Decktor K."/>
            <person name="DeGray S."/>
            <person name="Dhargay N."/>
            <person name="Dooley K."/>
            <person name="Dooley K."/>
            <person name="Dorje P."/>
            <person name="Dorjee K."/>
            <person name="Dorris L."/>
            <person name="Duffey N."/>
            <person name="Dupes A."/>
            <person name="Egbiremolen O."/>
            <person name="Elong R."/>
            <person name="Falk J."/>
            <person name="Farina A."/>
            <person name="Faro S."/>
            <person name="Ferguson D."/>
            <person name="Ferreira P."/>
            <person name="Fisher S."/>
            <person name="FitzGerald M."/>
            <person name="Foley K."/>
            <person name="Foley C."/>
            <person name="Franke A."/>
            <person name="Friedrich D."/>
            <person name="Gage D."/>
            <person name="Garber M."/>
            <person name="Gearin G."/>
            <person name="Giannoukos G."/>
            <person name="Goode T."/>
            <person name="Goyette A."/>
            <person name="Graham J."/>
            <person name="Grandbois E."/>
            <person name="Gyaltsen K."/>
            <person name="Hafez N."/>
            <person name="Hagopian D."/>
            <person name="Hagos B."/>
            <person name="Hall J."/>
            <person name="Healy C."/>
            <person name="Hegarty R."/>
            <person name="Honan T."/>
            <person name="Horn A."/>
            <person name="Houde N."/>
            <person name="Hughes L."/>
            <person name="Hunnicutt L."/>
            <person name="Husby M."/>
            <person name="Jester B."/>
            <person name="Jones C."/>
            <person name="Kamat A."/>
            <person name="Kanga B."/>
            <person name="Kells C."/>
            <person name="Khazanovich D."/>
            <person name="Kieu A.C."/>
            <person name="Kisner P."/>
            <person name="Kumar M."/>
            <person name="Lance K."/>
            <person name="Landers T."/>
            <person name="Lara M."/>
            <person name="Lee W."/>
            <person name="Leger J.-P."/>
            <person name="Lennon N."/>
            <person name="Leuper L."/>
            <person name="LeVine S."/>
            <person name="Liu J."/>
            <person name="Liu X."/>
            <person name="Lokyitsang Y."/>
            <person name="Lokyitsang T."/>
            <person name="Lui A."/>
            <person name="Macdonald J."/>
            <person name="Major J."/>
            <person name="Marabella R."/>
            <person name="Maru K."/>
            <person name="Matthews C."/>
            <person name="McDonough S."/>
            <person name="Mehta T."/>
            <person name="Meldrim J."/>
            <person name="Melnikov A."/>
            <person name="Meneus L."/>
            <person name="Mihalev A."/>
            <person name="Mihova T."/>
            <person name="Miller K."/>
            <person name="Mittelman R."/>
            <person name="Mlenga V."/>
            <person name="Mulrain L."/>
            <person name="Munson G."/>
            <person name="Navidi A."/>
            <person name="Naylor J."/>
            <person name="Nguyen T."/>
            <person name="Nguyen N."/>
            <person name="Nguyen C."/>
            <person name="Nguyen T."/>
            <person name="Nicol R."/>
            <person name="Norbu N."/>
            <person name="Norbu C."/>
            <person name="Novod N."/>
            <person name="Nyima T."/>
            <person name="Olandt P."/>
            <person name="O'Neill B."/>
            <person name="O'Neill K."/>
            <person name="Osman S."/>
            <person name="Oyono L."/>
            <person name="Patti C."/>
            <person name="Perrin D."/>
            <person name="Phunkhang P."/>
            <person name="Pierre F."/>
            <person name="Priest M."/>
            <person name="Rachupka A."/>
            <person name="Raghuraman S."/>
            <person name="Rameau R."/>
            <person name="Ray V."/>
            <person name="Raymond C."/>
            <person name="Rege F."/>
            <person name="Rise C."/>
            <person name="Rogers J."/>
            <person name="Rogov P."/>
            <person name="Sahalie J."/>
            <person name="Settipalli S."/>
            <person name="Sharpe T."/>
            <person name="Shea T."/>
            <person name="Sheehan M."/>
            <person name="Sherpa N."/>
            <person name="Shi J."/>
            <person name="Shih D."/>
            <person name="Sloan J."/>
            <person name="Smith C."/>
            <person name="Sparrow T."/>
            <person name="Stalker J."/>
            <person name="Stange-Thomann N."/>
            <person name="Stavropoulos S."/>
            <person name="Stone C."/>
            <person name="Stone S."/>
            <person name="Sykes S."/>
            <person name="Tchuinga P."/>
            <person name="Tenzing P."/>
            <person name="Tesfaye S."/>
            <person name="Thoulutsang D."/>
            <person name="Thoulutsang Y."/>
            <person name="Topham K."/>
            <person name="Topping I."/>
            <person name="Tsamla T."/>
            <person name="Vassiliev H."/>
            <person name="Venkataraman V."/>
            <person name="Vo A."/>
            <person name="Wangchuk T."/>
            <person name="Wangdi T."/>
            <person name="Weiand M."/>
            <person name="Wilkinson J."/>
            <person name="Wilson A."/>
            <person name="Yadav S."/>
            <person name="Yang S."/>
            <person name="Yang X."/>
            <person name="Young G."/>
            <person name="Yu Q."/>
            <person name="Zainoun J."/>
            <person name="Zembek L."/>
            <person name="Zimmer A."/>
            <person name="Lander E.S."/>
        </authorList>
    </citation>
    <scope>NUCLEOTIDE SEQUENCE [LARGE SCALE GENOMIC DNA]</scope>
    <source>
        <strain evidence="13">Boxer</strain>
    </source>
</reference>
<reference evidence="12" key="2">
    <citation type="journal article" date="2003" name="Gene">
        <title>Mammalian Crumbs3 is a small transmembrane protein linked to protein associated with Lin-7 (Pals1).</title>
        <authorList>
            <person name="Makarova O."/>
            <person name="Roh M.H."/>
            <person name="Liu C.-J."/>
            <person name="Laurinec S."/>
            <person name="Margolis B."/>
        </authorList>
    </citation>
    <scope>IDENTIFICATION IN A COMPLEX WITH PALS1 AND CRB3</scope>
    <scope>SUBCELLULAR LOCATION</scope>
</reference>
<reference evidence="12" key="3">
    <citation type="journal article" date="2003" name="J. Cell Sci.">
        <title>The Crumbs3-Pals1 complex participates in the establishment of polarity in mammalian epithelial cells.</title>
        <authorList>
            <person name="Roh M.H."/>
            <person name="Fan S."/>
            <person name="Liu C.-J."/>
            <person name="Margolis B."/>
        </authorList>
    </citation>
    <scope>SUBCELLULAR LOCATION</scope>
</reference>
<reference evidence="12" key="4">
    <citation type="journal article" date="2005" name="J. Cell Biol.">
        <title>PATJ regulates tight junction formation and polarity in mammalian epithelial cells.</title>
        <authorList>
            <person name="Shin K."/>
            <person name="Straight S."/>
            <person name="Margolis B."/>
        </authorList>
    </citation>
    <scope>FUNCTION</scope>
    <scope>INTERACTION WITH PALS1 AND CRB3</scope>
    <scope>SUBCELLULAR LOCATION</scope>
</reference>
<reference evidence="12" key="5">
    <citation type="journal article" date="2007" name="EMBO Rep.">
        <title>PATJ regulates directional migration of mammalian epithelial cells.</title>
        <authorList>
            <person name="Shin K."/>
            <person name="Wang Q."/>
            <person name="Margolis B."/>
        </authorList>
    </citation>
    <scope>FUNCTION</scope>
    <scope>INTERACTION WITH PARD3</scope>
    <scope>SUBCELLULAR LOCATION</scope>
</reference>
<reference key="6">
    <citation type="journal article" date="2024" name="Nature">
        <title>Membrane prewetting by condensates promotes tight-junction belt formation.</title>
        <authorList>
            <person name="Pombo-Garcia K."/>
            <person name="Adame-Arana O."/>
            <person name="Martin-Lemaitre C."/>
            <person name="Juelicher F."/>
            <person name="Honigmann A."/>
        </authorList>
    </citation>
    <scope>FUNCTION</scope>
    <scope>INTERACTION WITH TJP1</scope>
    <scope>SUBCELLULAR LOCATION</scope>
</reference>
<accession>E2QYC9</accession>
<keyword id="KW-0965">Cell junction</keyword>
<keyword id="KW-1003">Cell membrane</keyword>
<keyword id="KW-0963">Cytoplasm</keyword>
<keyword id="KW-0472">Membrane</keyword>
<keyword id="KW-0597">Phosphoprotein</keyword>
<keyword id="KW-1185">Reference proteome</keyword>
<keyword id="KW-0677">Repeat</keyword>
<keyword id="KW-0796">Tight junction</keyword>
<name>INADL_CANLF</name>
<protein>
    <recommendedName>
        <fullName evidence="3">InaD-like protein</fullName>
        <shortName evidence="3">Inadl protein</shortName>
    </recommendedName>
    <alternativeName>
        <fullName evidence="2">Channel-interacting PDZ domain-containing protein</fullName>
    </alternativeName>
    <alternativeName>
        <fullName evidence="2">Pals1-associated tight junction protein</fullName>
    </alternativeName>
    <alternativeName>
        <fullName evidence="3">Protein associated to tight junctions</fullName>
    </alternativeName>
</protein>
<feature type="chain" id="PRO_0000451409" description="InaD-like protein">
    <location>
        <begin position="1"/>
        <end position="1828"/>
    </location>
</feature>
<feature type="domain" description="L27" evidence="5">
    <location>
        <begin position="5"/>
        <end position="65"/>
    </location>
</feature>
<feature type="domain" description="PDZ 1" evidence="4">
    <location>
        <begin position="134"/>
        <end position="221"/>
    </location>
</feature>
<feature type="domain" description="PDZ 2" evidence="4">
    <location>
        <begin position="248"/>
        <end position="328"/>
    </location>
</feature>
<feature type="domain" description="PDZ 3" evidence="4">
    <location>
        <begin position="365"/>
        <end position="453"/>
    </location>
</feature>
<feature type="domain" description="PDZ 4" evidence="4">
    <location>
        <begin position="553"/>
        <end position="639"/>
    </location>
</feature>
<feature type="domain" description="PDZ 5" evidence="4">
    <location>
        <begin position="686"/>
        <end position="758"/>
    </location>
</feature>
<feature type="domain" description="PDZ 6" evidence="4">
    <location>
        <begin position="1070"/>
        <end position="1162"/>
    </location>
</feature>
<feature type="domain" description="PDZ 7" evidence="4">
    <location>
        <begin position="1241"/>
        <end position="1324"/>
    </location>
</feature>
<feature type="domain" description="PDZ 8" evidence="4">
    <location>
        <begin position="1464"/>
        <end position="1547"/>
    </location>
</feature>
<feature type="domain" description="PDZ 9" evidence="4">
    <location>
        <begin position="1560"/>
        <end position="1642"/>
    </location>
</feature>
<feature type="domain" description="PDZ 10" evidence="4">
    <location>
        <begin position="1703"/>
        <end position="1789"/>
    </location>
</feature>
<feature type="region of interest" description="Disordered" evidence="6">
    <location>
        <begin position="1168"/>
        <end position="1220"/>
    </location>
</feature>
<feature type="region of interest" description="Disordered" evidence="6">
    <location>
        <begin position="1333"/>
        <end position="1362"/>
    </location>
</feature>
<feature type="region of interest" description="Disordered" evidence="6">
    <location>
        <begin position="1645"/>
        <end position="1669"/>
    </location>
</feature>
<feature type="region of interest" description="Disordered" evidence="6">
    <location>
        <begin position="1805"/>
        <end position="1828"/>
    </location>
</feature>
<feature type="compositionally biased region" description="Pro residues" evidence="6">
    <location>
        <begin position="1196"/>
        <end position="1208"/>
    </location>
</feature>
<feature type="compositionally biased region" description="Polar residues" evidence="6">
    <location>
        <begin position="1345"/>
        <end position="1354"/>
    </location>
</feature>
<feature type="compositionally biased region" description="Polar residues" evidence="6">
    <location>
        <begin position="1645"/>
        <end position="1668"/>
    </location>
</feature>
<feature type="modified residue" description="Phosphoserine" evidence="3">
    <location>
        <position position="459"/>
    </location>
</feature>
<feature type="modified residue" description="Phosphoserine" evidence="2">
    <location>
        <position position="522"/>
    </location>
</feature>
<feature type="modified residue" description="Phosphoserine" evidence="2">
    <location>
        <position position="645"/>
    </location>
</feature>
<feature type="modified residue" description="Phosphoserine" evidence="2">
    <location>
        <position position="1211"/>
    </location>
</feature>
<feature type="modified residue" description="Phosphothreonine" evidence="3">
    <location>
        <position position="1535"/>
    </location>
</feature>
<evidence type="ECO:0000250" key="1">
    <source>
        <dbReference type="UniProtKB" id="F1MAD2"/>
    </source>
</evidence>
<evidence type="ECO:0000250" key="2">
    <source>
        <dbReference type="UniProtKB" id="Q63ZW7"/>
    </source>
</evidence>
<evidence type="ECO:0000250" key="3">
    <source>
        <dbReference type="UniProtKB" id="Q8NI35"/>
    </source>
</evidence>
<evidence type="ECO:0000255" key="4">
    <source>
        <dbReference type="PROSITE-ProRule" id="PRU00143"/>
    </source>
</evidence>
<evidence type="ECO:0000255" key="5">
    <source>
        <dbReference type="PROSITE-ProRule" id="PRU00365"/>
    </source>
</evidence>
<evidence type="ECO:0000256" key="6">
    <source>
        <dbReference type="SAM" id="MobiDB-lite"/>
    </source>
</evidence>
<evidence type="ECO:0000269" key="7">
    <source>
    </source>
</evidence>
<evidence type="ECO:0000269" key="8">
    <source>
    </source>
</evidence>
<evidence type="ECO:0000269" key="9">
    <source>
    </source>
</evidence>
<evidence type="ECO:0000269" key="10">
    <source>
    </source>
</evidence>
<evidence type="ECO:0000269" key="11">
    <source>
    </source>
</evidence>
<evidence type="ECO:0000305" key="12"/>
<evidence type="ECO:0000312" key="13">
    <source>
        <dbReference type="Proteomes" id="UP000002254"/>
    </source>
</evidence>